<comment type="function">
    <text evidence="1">Catalyzes the radical-mediated insertion of two sulfur atoms into the C-6 and C-8 positions of the octanoyl moiety bound to the lipoyl domains of lipoate-dependent enzymes, thereby converting the octanoylated domains into lipoylated derivatives.</text>
</comment>
<comment type="catalytic activity">
    <reaction evidence="1">
        <text>[[Fe-S] cluster scaffold protein carrying a second [4Fe-4S](2+) cluster] + N(6)-octanoyl-L-lysyl-[protein] + 2 oxidized [2Fe-2S]-[ferredoxin] + 2 S-adenosyl-L-methionine + 4 H(+) = [[Fe-S] cluster scaffold protein] + N(6)-[(R)-dihydrolipoyl]-L-lysyl-[protein] + 4 Fe(3+) + 2 hydrogen sulfide + 2 5'-deoxyadenosine + 2 L-methionine + 2 reduced [2Fe-2S]-[ferredoxin]</text>
        <dbReference type="Rhea" id="RHEA:16585"/>
        <dbReference type="Rhea" id="RHEA-COMP:9928"/>
        <dbReference type="Rhea" id="RHEA-COMP:10000"/>
        <dbReference type="Rhea" id="RHEA-COMP:10001"/>
        <dbReference type="Rhea" id="RHEA-COMP:10475"/>
        <dbReference type="Rhea" id="RHEA-COMP:14568"/>
        <dbReference type="Rhea" id="RHEA-COMP:14569"/>
        <dbReference type="ChEBI" id="CHEBI:15378"/>
        <dbReference type="ChEBI" id="CHEBI:17319"/>
        <dbReference type="ChEBI" id="CHEBI:29034"/>
        <dbReference type="ChEBI" id="CHEBI:29919"/>
        <dbReference type="ChEBI" id="CHEBI:33722"/>
        <dbReference type="ChEBI" id="CHEBI:33737"/>
        <dbReference type="ChEBI" id="CHEBI:33738"/>
        <dbReference type="ChEBI" id="CHEBI:57844"/>
        <dbReference type="ChEBI" id="CHEBI:59789"/>
        <dbReference type="ChEBI" id="CHEBI:78809"/>
        <dbReference type="ChEBI" id="CHEBI:83100"/>
        <dbReference type="EC" id="2.8.1.8"/>
    </reaction>
</comment>
<comment type="cofactor">
    <cofactor evidence="1">
        <name>[4Fe-4S] cluster</name>
        <dbReference type="ChEBI" id="CHEBI:49883"/>
    </cofactor>
    <text evidence="1">Binds 2 [4Fe-4S] clusters per subunit. One cluster is coordinated with 3 cysteines and an exchangeable S-adenosyl-L-methionine.</text>
</comment>
<comment type="pathway">
    <text evidence="1">Protein modification; protein lipoylation via endogenous pathway; protein N(6)-(lipoyl)lysine from octanoyl-[acyl-carrier-protein]: step 2/2.</text>
</comment>
<comment type="subcellular location">
    <subcellularLocation>
        <location evidence="1">Plastid</location>
        <location evidence="1">Chloroplast</location>
    </subcellularLocation>
</comment>
<comment type="similarity">
    <text evidence="1">Belongs to the radical SAM superfamily. Lipoyl synthase family.</text>
</comment>
<keyword id="KW-0004">4Fe-4S</keyword>
<keyword id="KW-0150">Chloroplast</keyword>
<keyword id="KW-0408">Iron</keyword>
<keyword id="KW-0411">Iron-sulfur</keyword>
<keyword id="KW-0479">Metal-binding</keyword>
<keyword id="KW-0934">Plastid</keyword>
<keyword id="KW-1185">Reference proteome</keyword>
<keyword id="KW-0949">S-adenosyl-L-methionine</keyword>
<keyword id="KW-0808">Transferase</keyword>
<keyword id="KW-0809">Transit peptide</keyword>
<feature type="transit peptide" description="Chloroplast" evidence="1">
    <location>
        <begin position="1"/>
        <end position="35"/>
    </location>
</feature>
<feature type="chain" id="PRO_0000398867" description="Lipoyl synthase 1, chloroplastic">
    <location>
        <begin position="36"/>
        <end position="376"/>
    </location>
</feature>
<feature type="domain" description="Radical SAM core" evidence="2">
    <location>
        <begin position="121"/>
        <end position="342"/>
    </location>
</feature>
<feature type="region of interest" description="Disordered" evidence="3">
    <location>
        <begin position="1"/>
        <end position="25"/>
    </location>
</feature>
<feature type="region of interest" description="Disordered" evidence="3">
    <location>
        <begin position="47"/>
        <end position="75"/>
    </location>
</feature>
<feature type="compositionally biased region" description="Polar residues" evidence="3">
    <location>
        <begin position="1"/>
        <end position="13"/>
    </location>
</feature>
<feature type="binding site" evidence="1">
    <location>
        <position position="107"/>
    </location>
    <ligand>
        <name>[4Fe-4S] cluster</name>
        <dbReference type="ChEBI" id="CHEBI:49883"/>
        <label>1</label>
    </ligand>
</feature>
<feature type="binding site" evidence="1">
    <location>
        <position position="112"/>
    </location>
    <ligand>
        <name>[4Fe-4S] cluster</name>
        <dbReference type="ChEBI" id="CHEBI:49883"/>
        <label>1</label>
    </ligand>
</feature>
<feature type="binding site" evidence="1">
    <location>
        <position position="118"/>
    </location>
    <ligand>
        <name>[4Fe-4S] cluster</name>
        <dbReference type="ChEBI" id="CHEBI:49883"/>
        <label>1</label>
    </ligand>
</feature>
<feature type="binding site" evidence="1">
    <location>
        <position position="138"/>
    </location>
    <ligand>
        <name>[4Fe-4S] cluster</name>
        <dbReference type="ChEBI" id="CHEBI:49883"/>
        <label>2</label>
        <note>4Fe-4S-S-AdoMet</note>
    </ligand>
</feature>
<feature type="binding site" evidence="1">
    <location>
        <position position="142"/>
    </location>
    <ligand>
        <name>[4Fe-4S] cluster</name>
        <dbReference type="ChEBI" id="CHEBI:49883"/>
        <label>2</label>
        <note>4Fe-4S-S-AdoMet</note>
    </ligand>
</feature>
<feature type="binding site" evidence="1">
    <location>
        <position position="145"/>
    </location>
    <ligand>
        <name>[4Fe-4S] cluster</name>
        <dbReference type="ChEBI" id="CHEBI:49883"/>
        <label>2</label>
        <note>4Fe-4S-S-AdoMet</note>
    </ligand>
</feature>
<feature type="binding site" evidence="1">
    <location>
        <position position="353"/>
    </location>
    <ligand>
        <name>[4Fe-4S] cluster</name>
        <dbReference type="ChEBI" id="CHEBI:49883"/>
        <label>1</label>
    </ligand>
</feature>
<sequence>MIEQSLSKPSFSLSIPIPQPPKSKSSFLCSYSKIRCESVDYPSSSKIDAKHPQISSINSNGGGKMGSYTGRDPNVKKPEWLRQKAPQGERYDEVKESLSRLKLNTVCQEAQCPNIGECWNGGGDGIATATIMVLGDTCTRGCRFCAVKTSRNPPPPDPMEPLNTALAIASWGVDYIVITSVDRDDLPDGGSGHFAQTVRAMKELKPEIMVECLTSDFRGDLKAVDTLVHSGLDVFAHNVETVKRLQRIVRDPRAGYEQSLSVLKHAKISKKGMITKTSIMLGLGESDNEVKEAMADLRAIGVDILTFGQYLQPTPLHLTVKEYVTPEKFAFWKEYGESIGFRYVASGPLVRSSYRAGELFVKTMVKESVKEAAAIS</sequence>
<evidence type="ECO:0000255" key="1">
    <source>
        <dbReference type="HAMAP-Rule" id="MF_03129"/>
    </source>
</evidence>
<evidence type="ECO:0000255" key="2">
    <source>
        <dbReference type="PROSITE-ProRule" id="PRU01266"/>
    </source>
</evidence>
<evidence type="ECO:0000256" key="3">
    <source>
        <dbReference type="SAM" id="MobiDB-lite"/>
    </source>
</evidence>
<name>LISC1_POPTR</name>
<gene>
    <name evidence="1" type="primary">LIP1P-1</name>
    <name type="ORF">POPTRDRAFT_774018</name>
</gene>
<accession>B9I666</accession>
<reference key="1">
    <citation type="journal article" date="2006" name="Science">
        <title>The genome of black cottonwood, Populus trichocarpa (Torr. &amp; Gray).</title>
        <authorList>
            <person name="Tuskan G.A."/>
            <person name="Difazio S."/>
            <person name="Jansson S."/>
            <person name="Bohlmann J."/>
            <person name="Grigoriev I."/>
            <person name="Hellsten U."/>
            <person name="Putnam N."/>
            <person name="Ralph S."/>
            <person name="Rombauts S."/>
            <person name="Salamov A."/>
            <person name="Schein J."/>
            <person name="Sterck L."/>
            <person name="Aerts A."/>
            <person name="Bhalerao R.R."/>
            <person name="Bhalerao R.P."/>
            <person name="Blaudez D."/>
            <person name="Boerjan W."/>
            <person name="Brun A."/>
            <person name="Brunner A."/>
            <person name="Busov V."/>
            <person name="Campbell M."/>
            <person name="Carlson J."/>
            <person name="Chalot M."/>
            <person name="Chapman J."/>
            <person name="Chen G.-L."/>
            <person name="Cooper D."/>
            <person name="Coutinho P.M."/>
            <person name="Couturier J."/>
            <person name="Covert S."/>
            <person name="Cronk Q."/>
            <person name="Cunningham R."/>
            <person name="Davis J."/>
            <person name="Degroeve S."/>
            <person name="Dejardin A."/>
            <person name="dePamphilis C.W."/>
            <person name="Detter J."/>
            <person name="Dirks B."/>
            <person name="Dubchak I."/>
            <person name="Duplessis S."/>
            <person name="Ehlting J."/>
            <person name="Ellis B."/>
            <person name="Gendler K."/>
            <person name="Goodstein D."/>
            <person name="Gribskov M."/>
            <person name="Grimwood J."/>
            <person name="Groover A."/>
            <person name="Gunter L."/>
            <person name="Hamberger B."/>
            <person name="Heinze B."/>
            <person name="Helariutta Y."/>
            <person name="Henrissat B."/>
            <person name="Holligan D."/>
            <person name="Holt R."/>
            <person name="Huang W."/>
            <person name="Islam-Faridi N."/>
            <person name="Jones S."/>
            <person name="Jones-Rhoades M."/>
            <person name="Jorgensen R."/>
            <person name="Joshi C."/>
            <person name="Kangasjaervi J."/>
            <person name="Karlsson J."/>
            <person name="Kelleher C."/>
            <person name="Kirkpatrick R."/>
            <person name="Kirst M."/>
            <person name="Kohler A."/>
            <person name="Kalluri U."/>
            <person name="Larimer F."/>
            <person name="Leebens-Mack J."/>
            <person name="Leple J.-C."/>
            <person name="Locascio P."/>
            <person name="Lou Y."/>
            <person name="Lucas S."/>
            <person name="Martin F."/>
            <person name="Montanini B."/>
            <person name="Napoli C."/>
            <person name="Nelson D.R."/>
            <person name="Nelson C."/>
            <person name="Nieminen K."/>
            <person name="Nilsson O."/>
            <person name="Pereda V."/>
            <person name="Peter G."/>
            <person name="Philippe R."/>
            <person name="Pilate G."/>
            <person name="Poliakov A."/>
            <person name="Razumovskaya J."/>
            <person name="Richardson P."/>
            <person name="Rinaldi C."/>
            <person name="Ritland K."/>
            <person name="Rouze P."/>
            <person name="Ryaboy D."/>
            <person name="Schmutz J."/>
            <person name="Schrader J."/>
            <person name="Segerman B."/>
            <person name="Shin H."/>
            <person name="Siddiqui A."/>
            <person name="Sterky F."/>
            <person name="Terry A."/>
            <person name="Tsai C.-J."/>
            <person name="Uberbacher E."/>
            <person name="Unneberg P."/>
            <person name="Vahala J."/>
            <person name="Wall K."/>
            <person name="Wessler S."/>
            <person name="Yang G."/>
            <person name="Yin T."/>
            <person name="Douglas C."/>
            <person name="Marra M."/>
            <person name="Sandberg G."/>
            <person name="Van de Peer Y."/>
            <person name="Rokhsar D.S."/>
        </authorList>
    </citation>
    <scope>NUCLEOTIDE SEQUENCE [LARGE SCALE GENOMIC DNA]</scope>
    <source>
        <strain>cv. Nisqually</strain>
    </source>
</reference>
<reference key="2">
    <citation type="submission" date="2008-12" db="EMBL/GenBank/DDBJ databases">
        <authorList>
            <consortium name="US DOE Joint Genome Institute (JGI-PGF)"/>
            <person name="Grigoriev I.V."/>
            <person name="Terry A."/>
            <person name="Salamov A.A."/>
            <person name="Otillar R."/>
            <person name="Lou Y."/>
            <person name="Lucas S."/>
            <person name="Hammon N."/>
            <person name="Glavina del Rio T."/>
            <person name="Detter J."/>
            <person name="Kalin E."/>
            <person name="Tice H."/>
            <person name="Pitluck S."/>
            <person name="Chapman J."/>
            <person name="Putnam N.H."/>
            <person name="Brunner A."/>
            <person name="Busov V."/>
            <person name="Campbell M."/>
            <person name="Chalot M."/>
            <person name="Covert S."/>
            <person name="Davis J."/>
            <person name="DiFazio S."/>
            <person name="Gribskov M."/>
            <person name="Gunter L."/>
            <person name="Hamberger B."/>
            <person name="Jansson S."/>
            <person name="Joshi C."/>
            <person name="Larimer F."/>
            <person name="Martin F."/>
            <person name="Napoli C."/>
            <person name="Nelson D."/>
            <person name="Ralph S."/>
            <person name="Rombauts S."/>
            <person name="Rouze P."/>
            <person name="Schrader J."/>
            <person name="Tsai C."/>
            <person name="Vahala J."/>
            <person name="Tuskan G."/>
            <person name="Rokhsar D."/>
        </authorList>
    </citation>
    <scope>GENOME REANNOTATION</scope>
    <source>
        <strain>cv. Nisqually</strain>
    </source>
</reference>
<protein>
    <recommendedName>
        <fullName>Lipoyl synthase 1, chloroplastic</fullName>
        <ecNumber evidence="1">2.8.1.8</ecNumber>
    </recommendedName>
    <alternativeName>
        <fullName evidence="1">Lipoate synthase 1</fullName>
        <shortName evidence="1">LS 1</shortName>
        <shortName evidence="1">Lip-syn 1</shortName>
    </alternativeName>
    <alternativeName>
        <fullName evidence="1">Lipoate synthase, plastidial 1</fullName>
        <shortName evidence="1">LIP1p 1</shortName>
    </alternativeName>
    <alternativeName>
        <fullName evidence="1">Lipoic acid synthase 1</fullName>
    </alternativeName>
</protein>
<organism>
    <name type="scientific">Populus trichocarpa</name>
    <name type="common">Western balsam poplar</name>
    <name type="synonym">Populus balsamifera subsp. trichocarpa</name>
    <dbReference type="NCBI Taxonomy" id="3694"/>
    <lineage>
        <taxon>Eukaryota</taxon>
        <taxon>Viridiplantae</taxon>
        <taxon>Streptophyta</taxon>
        <taxon>Embryophyta</taxon>
        <taxon>Tracheophyta</taxon>
        <taxon>Spermatophyta</taxon>
        <taxon>Magnoliopsida</taxon>
        <taxon>eudicotyledons</taxon>
        <taxon>Gunneridae</taxon>
        <taxon>Pentapetalae</taxon>
        <taxon>rosids</taxon>
        <taxon>fabids</taxon>
        <taxon>Malpighiales</taxon>
        <taxon>Salicaceae</taxon>
        <taxon>Saliceae</taxon>
        <taxon>Populus</taxon>
    </lineage>
</organism>
<proteinExistence type="inferred from homology"/>
<dbReference type="EC" id="2.8.1.8" evidence="1"/>
<dbReference type="EMBL" id="CM009302">
    <property type="protein sequence ID" value="EEE95835.1"/>
    <property type="molecule type" value="Genomic_DNA"/>
</dbReference>
<dbReference type="RefSeq" id="XP_002319912.1">
    <property type="nucleotide sequence ID" value="XM_002319876.2"/>
</dbReference>
<dbReference type="SMR" id="B9I666"/>
<dbReference type="FunCoup" id="B9I666">
    <property type="interactions" value="3207"/>
</dbReference>
<dbReference type="STRING" id="3694.B9I666"/>
<dbReference type="eggNOG" id="KOG2672">
    <property type="taxonomic scope" value="Eukaryota"/>
</dbReference>
<dbReference type="HOGENOM" id="CLU_033144_2_0_1"/>
<dbReference type="InParanoid" id="B9I666"/>
<dbReference type="UniPathway" id="UPA00538">
    <property type="reaction ID" value="UER00593"/>
</dbReference>
<dbReference type="Proteomes" id="UP000006729">
    <property type="component" value="Chromosome 13"/>
</dbReference>
<dbReference type="ExpressionAtlas" id="B9I666">
    <property type="expression patterns" value="baseline and differential"/>
</dbReference>
<dbReference type="GO" id="GO:0009507">
    <property type="term" value="C:chloroplast"/>
    <property type="evidence" value="ECO:0007669"/>
    <property type="project" value="UniProtKB-SubCell"/>
</dbReference>
<dbReference type="GO" id="GO:0005739">
    <property type="term" value="C:mitochondrion"/>
    <property type="evidence" value="ECO:0000318"/>
    <property type="project" value="GO_Central"/>
</dbReference>
<dbReference type="GO" id="GO:0051539">
    <property type="term" value="F:4 iron, 4 sulfur cluster binding"/>
    <property type="evidence" value="ECO:0007669"/>
    <property type="project" value="UniProtKB-UniRule"/>
</dbReference>
<dbReference type="GO" id="GO:0016992">
    <property type="term" value="F:lipoate synthase activity"/>
    <property type="evidence" value="ECO:0000318"/>
    <property type="project" value="GO_Central"/>
</dbReference>
<dbReference type="GO" id="GO:0046872">
    <property type="term" value="F:metal ion binding"/>
    <property type="evidence" value="ECO:0007669"/>
    <property type="project" value="UniProtKB-KW"/>
</dbReference>
<dbReference type="GO" id="GO:0009107">
    <property type="term" value="P:lipoate biosynthetic process"/>
    <property type="evidence" value="ECO:0000318"/>
    <property type="project" value="GO_Central"/>
</dbReference>
<dbReference type="CDD" id="cd01335">
    <property type="entry name" value="Radical_SAM"/>
    <property type="match status" value="1"/>
</dbReference>
<dbReference type="FunFam" id="3.20.20.70:FF:000036">
    <property type="entry name" value="Lipoyl synthase, mitochondrial"/>
    <property type="match status" value="1"/>
</dbReference>
<dbReference type="Gene3D" id="3.20.20.70">
    <property type="entry name" value="Aldolase class I"/>
    <property type="match status" value="1"/>
</dbReference>
<dbReference type="HAMAP" id="MF_00206">
    <property type="entry name" value="Lipoyl_synth"/>
    <property type="match status" value="1"/>
</dbReference>
<dbReference type="HAMAP" id="MF_03129">
    <property type="entry name" value="Lipoyl_synth_plantC"/>
    <property type="match status" value="1"/>
</dbReference>
<dbReference type="InterPro" id="IPR013785">
    <property type="entry name" value="Aldolase_TIM"/>
</dbReference>
<dbReference type="InterPro" id="IPR006638">
    <property type="entry name" value="Elp3/MiaA/NifB-like_rSAM"/>
</dbReference>
<dbReference type="InterPro" id="IPR031691">
    <property type="entry name" value="LIAS_N"/>
</dbReference>
<dbReference type="InterPro" id="IPR003698">
    <property type="entry name" value="Lipoyl_synth"/>
</dbReference>
<dbReference type="InterPro" id="IPR027526">
    <property type="entry name" value="Lipoyl_synth_chlpt"/>
</dbReference>
<dbReference type="InterPro" id="IPR007197">
    <property type="entry name" value="rSAM"/>
</dbReference>
<dbReference type="NCBIfam" id="TIGR00510">
    <property type="entry name" value="lipA"/>
    <property type="match status" value="1"/>
</dbReference>
<dbReference type="NCBIfam" id="NF004019">
    <property type="entry name" value="PRK05481.1"/>
    <property type="match status" value="1"/>
</dbReference>
<dbReference type="NCBIfam" id="NF009544">
    <property type="entry name" value="PRK12928.1"/>
    <property type="match status" value="1"/>
</dbReference>
<dbReference type="PANTHER" id="PTHR10949">
    <property type="entry name" value="LIPOYL SYNTHASE"/>
    <property type="match status" value="1"/>
</dbReference>
<dbReference type="PANTHER" id="PTHR10949:SF38">
    <property type="entry name" value="LIPOYL SYNTHASE, CHLOROPLASTIC"/>
    <property type="match status" value="1"/>
</dbReference>
<dbReference type="Pfam" id="PF16881">
    <property type="entry name" value="LIAS_N"/>
    <property type="match status" value="1"/>
</dbReference>
<dbReference type="Pfam" id="PF04055">
    <property type="entry name" value="Radical_SAM"/>
    <property type="match status" value="1"/>
</dbReference>
<dbReference type="PIRSF" id="PIRSF005963">
    <property type="entry name" value="Lipoyl_synth"/>
    <property type="match status" value="1"/>
</dbReference>
<dbReference type="SFLD" id="SFLDF00271">
    <property type="entry name" value="lipoyl_synthase"/>
    <property type="match status" value="1"/>
</dbReference>
<dbReference type="SFLD" id="SFLDS00029">
    <property type="entry name" value="Radical_SAM"/>
    <property type="match status" value="1"/>
</dbReference>
<dbReference type="SMART" id="SM00729">
    <property type="entry name" value="Elp3"/>
    <property type="match status" value="1"/>
</dbReference>
<dbReference type="SUPFAM" id="SSF102114">
    <property type="entry name" value="Radical SAM enzymes"/>
    <property type="match status" value="1"/>
</dbReference>
<dbReference type="PROSITE" id="PS51918">
    <property type="entry name" value="RADICAL_SAM"/>
    <property type="match status" value="1"/>
</dbReference>